<name>PNP_PELPD</name>
<dbReference type="EC" id="2.7.7.8" evidence="1"/>
<dbReference type="EMBL" id="CP000482">
    <property type="protein sequence ID" value="ABK98596.1"/>
    <property type="molecule type" value="Genomic_DNA"/>
</dbReference>
<dbReference type="RefSeq" id="WP_011734903.1">
    <property type="nucleotide sequence ID" value="NC_008609.1"/>
</dbReference>
<dbReference type="SMR" id="A1AMM6"/>
<dbReference type="STRING" id="338966.Ppro_0968"/>
<dbReference type="KEGG" id="ppd:Ppro_0968"/>
<dbReference type="eggNOG" id="COG1185">
    <property type="taxonomic scope" value="Bacteria"/>
</dbReference>
<dbReference type="HOGENOM" id="CLU_004217_2_2_7"/>
<dbReference type="OrthoDB" id="9804305at2"/>
<dbReference type="Proteomes" id="UP000006732">
    <property type="component" value="Chromosome"/>
</dbReference>
<dbReference type="GO" id="GO:0005829">
    <property type="term" value="C:cytosol"/>
    <property type="evidence" value="ECO:0007669"/>
    <property type="project" value="TreeGrafter"/>
</dbReference>
<dbReference type="GO" id="GO:0000175">
    <property type="term" value="F:3'-5'-RNA exonuclease activity"/>
    <property type="evidence" value="ECO:0007669"/>
    <property type="project" value="TreeGrafter"/>
</dbReference>
<dbReference type="GO" id="GO:0000287">
    <property type="term" value="F:magnesium ion binding"/>
    <property type="evidence" value="ECO:0007669"/>
    <property type="project" value="UniProtKB-UniRule"/>
</dbReference>
<dbReference type="GO" id="GO:0004654">
    <property type="term" value="F:polyribonucleotide nucleotidyltransferase activity"/>
    <property type="evidence" value="ECO:0007669"/>
    <property type="project" value="UniProtKB-UniRule"/>
</dbReference>
<dbReference type="GO" id="GO:0003723">
    <property type="term" value="F:RNA binding"/>
    <property type="evidence" value="ECO:0007669"/>
    <property type="project" value="UniProtKB-UniRule"/>
</dbReference>
<dbReference type="GO" id="GO:0006402">
    <property type="term" value="P:mRNA catabolic process"/>
    <property type="evidence" value="ECO:0007669"/>
    <property type="project" value="UniProtKB-UniRule"/>
</dbReference>
<dbReference type="GO" id="GO:0006396">
    <property type="term" value="P:RNA processing"/>
    <property type="evidence" value="ECO:0007669"/>
    <property type="project" value="InterPro"/>
</dbReference>
<dbReference type="CDD" id="cd02393">
    <property type="entry name" value="KH-I_PNPase"/>
    <property type="match status" value="1"/>
</dbReference>
<dbReference type="CDD" id="cd11363">
    <property type="entry name" value="RNase_PH_PNPase_1"/>
    <property type="match status" value="1"/>
</dbReference>
<dbReference type="CDD" id="cd11364">
    <property type="entry name" value="RNase_PH_PNPase_2"/>
    <property type="match status" value="1"/>
</dbReference>
<dbReference type="CDD" id="cd04472">
    <property type="entry name" value="S1_PNPase"/>
    <property type="match status" value="1"/>
</dbReference>
<dbReference type="FunFam" id="3.30.1370.10:FF:000001">
    <property type="entry name" value="Polyribonucleotide nucleotidyltransferase"/>
    <property type="match status" value="1"/>
</dbReference>
<dbReference type="FunFam" id="3.30.230.70:FF:000001">
    <property type="entry name" value="Polyribonucleotide nucleotidyltransferase"/>
    <property type="match status" value="1"/>
</dbReference>
<dbReference type="FunFam" id="3.30.230.70:FF:000002">
    <property type="entry name" value="Polyribonucleotide nucleotidyltransferase"/>
    <property type="match status" value="1"/>
</dbReference>
<dbReference type="FunFam" id="2.40.50.140:FF:000189">
    <property type="entry name" value="Polyribonucleotide nucleotidyltransferase, putative"/>
    <property type="match status" value="1"/>
</dbReference>
<dbReference type="Gene3D" id="3.30.230.70">
    <property type="entry name" value="GHMP Kinase, N-terminal domain"/>
    <property type="match status" value="2"/>
</dbReference>
<dbReference type="Gene3D" id="3.30.1370.10">
    <property type="entry name" value="K Homology domain, type 1"/>
    <property type="match status" value="1"/>
</dbReference>
<dbReference type="Gene3D" id="2.40.50.140">
    <property type="entry name" value="Nucleic acid-binding proteins"/>
    <property type="match status" value="1"/>
</dbReference>
<dbReference type="HAMAP" id="MF_01595">
    <property type="entry name" value="PNPase"/>
    <property type="match status" value="1"/>
</dbReference>
<dbReference type="InterPro" id="IPR001247">
    <property type="entry name" value="ExoRNase_PH_dom1"/>
</dbReference>
<dbReference type="InterPro" id="IPR015847">
    <property type="entry name" value="ExoRNase_PH_dom2"/>
</dbReference>
<dbReference type="InterPro" id="IPR036345">
    <property type="entry name" value="ExoRNase_PH_dom2_sf"/>
</dbReference>
<dbReference type="InterPro" id="IPR004087">
    <property type="entry name" value="KH_dom"/>
</dbReference>
<dbReference type="InterPro" id="IPR004088">
    <property type="entry name" value="KH_dom_type_1"/>
</dbReference>
<dbReference type="InterPro" id="IPR036612">
    <property type="entry name" value="KH_dom_type_1_sf"/>
</dbReference>
<dbReference type="InterPro" id="IPR012340">
    <property type="entry name" value="NA-bd_OB-fold"/>
</dbReference>
<dbReference type="InterPro" id="IPR012162">
    <property type="entry name" value="PNPase"/>
</dbReference>
<dbReference type="InterPro" id="IPR027408">
    <property type="entry name" value="PNPase/RNase_PH_dom_sf"/>
</dbReference>
<dbReference type="InterPro" id="IPR015848">
    <property type="entry name" value="PNPase_PH_RNA-bd_bac/org-type"/>
</dbReference>
<dbReference type="InterPro" id="IPR036456">
    <property type="entry name" value="PNPase_PH_RNA-bd_sf"/>
</dbReference>
<dbReference type="InterPro" id="IPR020568">
    <property type="entry name" value="Ribosomal_Su5_D2-typ_SF"/>
</dbReference>
<dbReference type="InterPro" id="IPR003029">
    <property type="entry name" value="S1_domain"/>
</dbReference>
<dbReference type="NCBIfam" id="TIGR03591">
    <property type="entry name" value="polynuc_phos"/>
    <property type="match status" value="1"/>
</dbReference>
<dbReference type="NCBIfam" id="NF008805">
    <property type="entry name" value="PRK11824.1"/>
    <property type="match status" value="1"/>
</dbReference>
<dbReference type="PANTHER" id="PTHR11252">
    <property type="entry name" value="POLYRIBONUCLEOTIDE NUCLEOTIDYLTRANSFERASE"/>
    <property type="match status" value="1"/>
</dbReference>
<dbReference type="PANTHER" id="PTHR11252:SF0">
    <property type="entry name" value="POLYRIBONUCLEOTIDE NUCLEOTIDYLTRANSFERASE 1, MITOCHONDRIAL"/>
    <property type="match status" value="1"/>
</dbReference>
<dbReference type="Pfam" id="PF00013">
    <property type="entry name" value="KH_1"/>
    <property type="match status" value="1"/>
</dbReference>
<dbReference type="Pfam" id="PF03726">
    <property type="entry name" value="PNPase"/>
    <property type="match status" value="1"/>
</dbReference>
<dbReference type="Pfam" id="PF01138">
    <property type="entry name" value="RNase_PH"/>
    <property type="match status" value="2"/>
</dbReference>
<dbReference type="Pfam" id="PF03725">
    <property type="entry name" value="RNase_PH_C"/>
    <property type="match status" value="2"/>
</dbReference>
<dbReference type="Pfam" id="PF00575">
    <property type="entry name" value="S1"/>
    <property type="match status" value="1"/>
</dbReference>
<dbReference type="PIRSF" id="PIRSF005499">
    <property type="entry name" value="PNPase"/>
    <property type="match status" value="1"/>
</dbReference>
<dbReference type="SMART" id="SM00322">
    <property type="entry name" value="KH"/>
    <property type="match status" value="1"/>
</dbReference>
<dbReference type="SMART" id="SM00316">
    <property type="entry name" value="S1"/>
    <property type="match status" value="1"/>
</dbReference>
<dbReference type="SUPFAM" id="SSF54791">
    <property type="entry name" value="Eukaryotic type KH-domain (KH-domain type I)"/>
    <property type="match status" value="1"/>
</dbReference>
<dbReference type="SUPFAM" id="SSF50249">
    <property type="entry name" value="Nucleic acid-binding proteins"/>
    <property type="match status" value="1"/>
</dbReference>
<dbReference type="SUPFAM" id="SSF46915">
    <property type="entry name" value="Polynucleotide phosphorylase/guanosine pentaphosphate synthase (PNPase/GPSI), domain 3"/>
    <property type="match status" value="1"/>
</dbReference>
<dbReference type="SUPFAM" id="SSF55666">
    <property type="entry name" value="Ribonuclease PH domain 2-like"/>
    <property type="match status" value="2"/>
</dbReference>
<dbReference type="SUPFAM" id="SSF54211">
    <property type="entry name" value="Ribosomal protein S5 domain 2-like"/>
    <property type="match status" value="2"/>
</dbReference>
<dbReference type="PROSITE" id="PS50084">
    <property type="entry name" value="KH_TYPE_1"/>
    <property type="match status" value="1"/>
</dbReference>
<dbReference type="PROSITE" id="PS50126">
    <property type="entry name" value="S1"/>
    <property type="match status" value="1"/>
</dbReference>
<accession>A1AMM6</accession>
<sequence>MEHVVDVEFGGKMVTISTGKMAKQANGAVVVKSGDTMVLVTAVAQKEAKEGQDFFPLTVNYTEKAYAGGKIPGSFFRREARPSDPETLTCRLIDRPIRPLFPENFLNDTQIIATVVSADKDHDPRILSMLGASAALEVSDIPFQGPIAGVKVGRVDGRLICNPTADELELSDMEIVVAASRDAIIMVEGEARFVSEDDMLDAIFFGHAAVQPVLEAQEKLKQLAGVAKRDVPPPVVDQALLARVRELASERMSAAVKIKSKQERHNQIDLITAETTASLAAEFEGNEKQIRAFLGDLEYECVRADVLNSGVRIDGRDTVTIRPIATEAGLLPRTHGSALFTRGETQALVVTTLGTSSDEQRMDSLYGEYRKRFLLHYNFPPFSVGETSFRLGPGRREIGHGMLAERALSAILPKHDDFPYTIRIVSETLESNGSSSMAAVCGGCMSLMDAGVPISAPVAGIAMGLIKEGEKVAILSDILGDEDHLGDMDFKVAGSSDGITALQMDIKIGGVTREIMQKALAQAREGRLHILGKMAETLGAPRPEMSSFAPRITTIWVKTDKIRDVIGTGGKNIRNITETTGVTVDIEDTGRINIASTSKEACDLAIQMIRGLTDEAEEGKLYMGIVKKIMDFGAFVEILPGTDGLVHISELDTKRVKTVTEVLNEGDRVLVKCIGVDKNGKVKLSRKEALGLNPDGTPATDAPAGE</sequence>
<reference key="1">
    <citation type="submission" date="2006-10" db="EMBL/GenBank/DDBJ databases">
        <title>Complete sequence of chromosome of Pelobacter propionicus DSM 2379.</title>
        <authorList>
            <consortium name="US DOE Joint Genome Institute"/>
            <person name="Copeland A."/>
            <person name="Lucas S."/>
            <person name="Lapidus A."/>
            <person name="Barry K."/>
            <person name="Detter J.C."/>
            <person name="Glavina del Rio T."/>
            <person name="Hammon N."/>
            <person name="Israni S."/>
            <person name="Dalin E."/>
            <person name="Tice H."/>
            <person name="Pitluck S."/>
            <person name="Saunders E."/>
            <person name="Brettin T."/>
            <person name="Bruce D."/>
            <person name="Han C."/>
            <person name="Tapia R."/>
            <person name="Schmutz J."/>
            <person name="Larimer F."/>
            <person name="Land M."/>
            <person name="Hauser L."/>
            <person name="Kyrpides N."/>
            <person name="Kim E."/>
            <person name="Lovley D."/>
            <person name="Richardson P."/>
        </authorList>
    </citation>
    <scope>NUCLEOTIDE SEQUENCE [LARGE SCALE GENOMIC DNA]</scope>
    <source>
        <strain>DSM 2379 / NBRC 103807 / OttBd1</strain>
    </source>
</reference>
<gene>
    <name evidence="1" type="primary">pnp</name>
    <name type="ordered locus">Ppro_0968</name>
</gene>
<feature type="chain" id="PRO_0000329753" description="Polyribonucleotide nucleotidyltransferase">
    <location>
        <begin position="1"/>
        <end position="706"/>
    </location>
</feature>
<feature type="domain" description="KH" evidence="1">
    <location>
        <begin position="550"/>
        <end position="609"/>
    </location>
</feature>
<feature type="domain" description="S1 motif" evidence="1">
    <location>
        <begin position="619"/>
        <end position="687"/>
    </location>
</feature>
<feature type="binding site" evidence="1">
    <location>
        <position position="483"/>
    </location>
    <ligand>
        <name>Mg(2+)</name>
        <dbReference type="ChEBI" id="CHEBI:18420"/>
    </ligand>
</feature>
<feature type="binding site" evidence="1">
    <location>
        <position position="489"/>
    </location>
    <ligand>
        <name>Mg(2+)</name>
        <dbReference type="ChEBI" id="CHEBI:18420"/>
    </ligand>
</feature>
<keyword id="KW-0963">Cytoplasm</keyword>
<keyword id="KW-0460">Magnesium</keyword>
<keyword id="KW-0479">Metal-binding</keyword>
<keyword id="KW-0548">Nucleotidyltransferase</keyword>
<keyword id="KW-1185">Reference proteome</keyword>
<keyword id="KW-0694">RNA-binding</keyword>
<keyword id="KW-0808">Transferase</keyword>
<evidence type="ECO:0000255" key="1">
    <source>
        <dbReference type="HAMAP-Rule" id="MF_01595"/>
    </source>
</evidence>
<protein>
    <recommendedName>
        <fullName evidence="1">Polyribonucleotide nucleotidyltransferase</fullName>
        <ecNumber evidence="1">2.7.7.8</ecNumber>
    </recommendedName>
    <alternativeName>
        <fullName evidence="1">Polynucleotide phosphorylase</fullName>
        <shortName evidence="1">PNPase</shortName>
    </alternativeName>
</protein>
<organism>
    <name type="scientific">Pelobacter propionicus (strain DSM 2379 / NBRC 103807 / OttBd1)</name>
    <dbReference type="NCBI Taxonomy" id="338966"/>
    <lineage>
        <taxon>Bacteria</taxon>
        <taxon>Pseudomonadati</taxon>
        <taxon>Thermodesulfobacteriota</taxon>
        <taxon>Desulfuromonadia</taxon>
        <taxon>Desulfuromonadales</taxon>
        <taxon>Desulfuromonadaceae</taxon>
        <taxon>Pelobacter</taxon>
    </lineage>
</organism>
<comment type="function">
    <text evidence="1">Involved in mRNA degradation. Catalyzes the phosphorolysis of single-stranded polyribonucleotides processively in the 3'- to 5'-direction.</text>
</comment>
<comment type="catalytic activity">
    <reaction evidence="1">
        <text>RNA(n+1) + phosphate = RNA(n) + a ribonucleoside 5'-diphosphate</text>
        <dbReference type="Rhea" id="RHEA:22096"/>
        <dbReference type="Rhea" id="RHEA-COMP:14527"/>
        <dbReference type="Rhea" id="RHEA-COMP:17342"/>
        <dbReference type="ChEBI" id="CHEBI:43474"/>
        <dbReference type="ChEBI" id="CHEBI:57930"/>
        <dbReference type="ChEBI" id="CHEBI:140395"/>
        <dbReference type="EC" id="2.7.7.8"/>
    </reaction>
</comment>
<comment type="cofactor">
    <cofactor evidence="1">
        <name>Mg(2+)</name>
        <dbReference type="ChEBI" id="CHEBI:18420"/>
    </cofactor>
</comment>
<comment type="subcellular location">
    <subcellularLocation>
        <location evidence="1">Cytoplasm</location>
    </subcellularLocation>
</comment>
<comment type="similarity">
    <text evidence="1">Belongs to the polyribonucleotide nucleotidyltransferase family.</text>
</comment>
<proteinExistence type="inferred from homology"/>